<sequence>MDEKIETRLIGATVQSNEPDLERSIRPKRLSDYIGQAAVREQMDIFIRAATNRREALDHVLIFGPPGLGKTTLAHIIAHEMQAGLKQTSGPVLEKAGDLAALLTNLEPHDVLFIDEIHRLNPAIEEVLYPALEDFQLDIIIGEGPSARSIKLDLPPFTLVGATTRAGLLTSPLRDRFGIVQRLEFYRIPDLIHIVKRAAHILNVVIDENGAGEIARRSRGTPRIANRLLRRVRDFAEVRANGMINESIAKEALDLLNVDIRGLDVMDRKLLETIIKKFQGGPVGIESLAAAISEERGTIEDVIEPYLIQEGFILRTPRGRIATELTYQHFKLPLPTQSTLQENFDLLGKVE</sequence>
<organism>
    <name type="scientific">Coxiella burnetii (strain RSA 493 / Nine Mile phase I)</name>
    <dbReference type="NCBI Taxonomy" id="227377"/>
    <lineage>
        <taxon>Bacteria</taxon>
        <taxon>Pseudomonadati</taxon>
        <taxon>Pseudomonadota</taxon>
        <taxon>Gammaproteobacteria</taxon>
        <taxon>Legionellales</taxon>
        <taxon>Coxiellaceae</taxon>
        <taxon>Coxiella</taxon>
    </lineage>
</organism>
<comment type="function">
    <text evidence="1">The RuvA-RuvB-RuvC complex processes Holliday junction (HJ) DNA during genetic recombination and DNA repair, while the RuvA-RuvB complex plays an important role in the rescue of blocked DNA replication forks via replication fork reversal (RFR). RuvA specifically binds to HJ cruciform DNA, conferring on it an open structure. The RuvB hexamer acts as an ATP-dependent pump, pulling dsDNA into and through the RuvAB complex. RuvB forms 2 homohexamers on either side of HJ DNA bound by 1 or 2 RuvA tetramers; 4 subunits per hexamer contact DNA at a time. Coordinated motions by a converter formed by DNA-disengaged RuvB subunits stimulates ATP hydrolysis and nucleotide exchange. Immobilization of the converter enables RuvB to convert the ATP-contained energy into a lever motion, pulling 2 nucleotides of DNA out of the RuvA tetramer per ATP hydrolyzed, thus driving DNA branch migration. The RuvB motors rotate together with the DNA substrate, which together with the progressing nucleotide cycle form the mechanistic basis for DNA recombination by continuous HJ branch migration. Branch migration allows RuvC to scan DNA until it finds its consensus sequence, where it cleaves and resolves cruciform DNA.</text>
</comment>
<comment type="catalytic activity">
    <reaction evidence="1">
        <text>ATP + H2O = ADP + phosphate + H(+)</text>
        <dbReference type="Rhea" id="RHEA:13065"/>
        <dbReference type="ChEBI" id="CHEBI:15377"/>
        <dbReference type="ChEBI" id="CHEBI:15378"/>
        <dbReference type="ChEBI" id="CHEBI:30616"/>
        <dbReference type="ChEBI" id="CHEBI:43474"/>
        <dbReference type="ChEBI" id="CHEBI:456216"/>
    </reaction>
</comment>
<comment type="subunit">
    <text evidence="1">Homohexamer. Forms an RuvA(8)-RuvB(12)-Holliday junction (HJ) complex. HJ DNA is sandwiched between 2 RuvA tetramers; dsDNA enters through RuvA and exits via RuvB. An RuvB hexamer assembles on each DNA strand where it exits the tetramer. Each RuvB hexamer is contacted by two RuvA subunits (via domain III) on 2 adjacent RuvB subunits; this complex drives branch migration. In the full resolvosome a probable DNA-RuvA(4)-RuvB(12)-RuvC(2) complex forms which resolves the HJ.</text>
</comment>
<comment type="subcellular location">
    <subcellularLocation>
        <location evidence="1">Cytoplasm</location>
    </subcellularLocation>
</comment>
<comment type="domain">
    <text evidence="1">Has 3 domains, the large (RuvB-L) and small ATPase (RuvB-S) domains and the C-terminal head (RuvB-H) domain. The head domain binds DNA, while the ATPase domains jointly bind ATP, ADP or are empty depending on the state of the subunit in the translocation cycle. During a single DNA translocation step the structure of each domain remains the same, but their relative positions change.</text>
</comment>
<comment type="similarity">
    <text evidence="1">Belongs to the RuvB family.</text>
</comment>
<protein>
    <recommendedName>
        <fullName evidence="1">Holliday junction branch migration complex subunit RuvB</fullName>
        <ecNumber evidence="1">3.6.4.-</ecNumber>
    </recommendedName>
</protein>
<evidence type="ECO:0000255" key="1">
    <source>
        <dbReference type="HAMAP-Rule" id="MF_00016"/>
    </source>
</evidence>
<gene>
    <name evidence="1" type="primary">ruvB</name>
    <name type="ordered locus">CBU_1570</name>
</gene>
<accession>Q83BE0</accession>
<keyword id="KW-0067">ATP-binding</keyword>
<keyword id="KW-0963">Cytoplasm</keyword>
<keyword id="KW-0227">DNA damage</keyword>
<keyword id="KW-0233">DNA recombination</keyword>
<keyword id="KW-0234">DNA repair</keyword>
<keyword id="KW-0238">DNA-binding</keyword>
<keyword id="KW-0378">Hydrolase</keyword>
<keyword id="KW-0547">Nucleotide-binding</keyword>
<keyword id="KW-1185">Reference proteome</keyword>
<dbReference type="EC" id="3.6.4.-" evidence="1"/>
<dbReference type="EMBL" id="AE016828">
    <property type="protein sequence ID" value="AAO91067.1"/>
    <property type="molecule type" value="Genomic_DNA"/>
</dbReference>
<dbReference type="RefSeq" id="NP_820553.1">
    <property type="nucleotide sequence ID" value="NC_002971.4"/>
</dbReference>
<dbReference type="RefSeq" id="WP_005772105.1">
    <property type="nucleotide sequence ID" value="NZ_CDBG01000001.1"/>
</dbReference>
<dbReference type="SMR" id="Q83BE0"/>
<dbReference type="STRING" id="227377.CBU_1570"/>
<dbReference type="EnsemblBacteria" id="AAO91067">
    <property type="protein sequence ID" value="AAO91067"/>
    <property type="gene ID" value="CBU_1570"/>
</dbReference>
<dbReference type="GeneID" id="1209480"/>
<dbReference type="KEGG" id="cbu:CBU_1570"/>
<dbReference type="PATRIC" id="fig|227377.7.peg.1571"/>
<dbReference type="eggNOG" id="COG2255">
    <property type="taxonomic scope" value="Bacteria"/>
</dbReference>
<dbReference type="HOGENOM" id="CLU_055599_1_0_6"/>
<dbReference type="OrthoDB" id="9804478at2"/>
<dbReference type="Proteomes" id="UP000002671">
    <property type="component" value="Chromosome"/>
</dbReference>
<dbReference type="GO" id="GO:0005737">
    <property type="term" value="C:cytoplasm"/>
    <property type="evidence" value="ECO:0007669"/>
    <property type="project" value="UniProtKB-SubCell"/>
</dbReference>
<dbReference type="GO" id="GO:0048476">
    <property type="term" value="C:Holliday junction resolvase complex"/>
    <property type="evidence" value="ECO:0007669"/>
    <property type="project" value="UniProtKB-UniRule"/>
</dbReference>
<dbReference type="GO" id="GO:0005524">
    <property type="term" value="F:ATP binding"/>
    <property type="evidence" value="ECO:0007669"/>
    <property type="project" value="UniProtKB-UniRule"/>
</dbReference>
<dbReference type="GO" id="GO:0016887">
    <property type="term" value="F:ATP hydrolysis activity"/>
    <property type="evidence" value="ECO:0007669"/>
    <property type="project" value="InterPro"/>
</dbReference>
<dbReference type="GO" id="GO:0000400">
    <property type="term" value="F:four-way junction DNA binding"/>
    <property type="evidence" value="ECO:0007669"/>
    <property type="project" value="UniProtKB-UniRule"/>
</dbReference>
<dbReference type="GO" id="GO:0009378">
    <property type="term" value="F:four-way junction helicase activity"/>
    <property type="evidence" value="ECO:0007669"/>
    <property type="project" value="InterPro"/>
</dbReference>
<dbReference type="GO" id="GO:0006310">
    <property type="term" value="P:DNA recombination"/>
    <property type="evidence" value="ECO:0007669"/>
    <property type="project" value="UniProtKB-UniRule"/>
</dbReference>
<dbReference type="GO" id="GO:0006281">
    <property type="term" value="P:DNA repair"/>
    <property type="evidence" value="ECO:0007669"/>
    <property type="project" value="UniProtKB-UniRule"/>
</dbReference>
<dbReference type="CDD" id="cd00009">
    <property type="entry name" value="AAA"/>
    <property type="match status" value="1"/>
</dbReference>
<dbReference type="FunFam" id="1.10.8.60:FF:000023">
    <property type="entry name" value="Holliday junction ATP-dependent DNA helicase RuvB"/>
    <property type="match status" value="1"/>
</dbReference>
<dbReference type="FunFam" id="3.40.50.300:FF:000073">
    <property type="entry name" value="Holliday junction ATP-dependent DNA helicase RuvB"/>
    <property type="match status" value="1"/>
</dbReference>
<dbReference type="Gene3D" id="1.10.8.60">
    <property type="match status" value="1"/>
</dbReference>
<dbReference type="Gene3D" id="3.40.50.300">
    <property type="entry name" value="P-loop containing nucleotide triphosphate hydrolases"/>
    <property type="match status" value="1"/>
</dbReference>
<dbReference type="Gene3D" id="1.10.10.10">
    <property type="entry name" value="Winged helix-like DNA-binding domain superfamily/Winged helix DNA-binding domain"/>
    <property type="match status" value="1"/>
</dbReference>
<dbReference type="HAMAP" id="MF_00016">
    <property type="entry name" value="DNA_HJ_migration_RuvB"/>
    <property type="match status" value="1"/>
</dbReference>
<dbReference type="InterPro" id="IPR003593">
    <property type="entry name" value="AAA+_ATPase"/>
</dbReference>
<dbReference type="InterPro" id="IPR041445">
    <property type="entry name" value="AAA_lid_4"/>
</dbReference>
<dbReference type="InterPro" id="IPR004605">
    <property type="entry name" value="DNA_helicase_Holl-junc_RuvB"/>
</dbReference>
<dbReference type="InterPro" id="IPR027417">
    <property type="entry name" value="P-loop_NTPase"/>
</dbReference>
<dbReference type="InterPro" id="IPR008824">
    <property type="entry name" value="RuvB-like_N"/>
</dbReference>
<dbReference type="InterPro" id="IPR008823">
    <property type="entry name" value="RuvB_C"/>
</dbReference>
<dbReference type="InterPro" id="IPR036388">
    <property type="entry name" value="WH-like_DNA-bd_sf"/>
</dbReference>
<dbReference type="InterPro" id="IPR036390">
    <property type="entry name" value="WH_DNA-bd_sf"/>
</dbReference>
<dbReference type="NCBIfam" id="NF000868">
    <property type="entry name" value="PRK00080.1"/>
    <property type="match status" value="1"/>
</dbReference>
<dbReference type="NCBIfam" id="TIGR00635">
    <property type="entry name" value="ruvB"/>
    <property type="match status" value="1"/>
</dbReference>
<dbReference type="PANTHER" id="PTHR42848">
    <property type="match status" value="1"/>
</dbReference>
<dbReference type="PANTHER" id="PTHR42848:SF1">
    <property type="entry name" value="HOLLIDAY JUNCTION BRANCH MIGRATION COMPLEX SUBUNIT RUVB"/>
    <property type="match status" value="1"/>
</dbReference>
<dbReference type="Pfam" id="PF17864">
    <property type="entry name" value="AAA_lid_4"/>
    <property type="match status" value="1"/>
</dbReference>
<dbReference type="Pfam" id="PF05491">
    <property type="entry name" value="RuvB_C"/>
    <property type="match status" value="1"/>
</dbReference>
<dbReference type="Pfam" id="PF05496">
    <property type="entry name" value="RuvB_N"/>
    <property type="match status" value="1"/>
</dbReference>
<dbReference type="SMART" id="SM00382">
    <property type="entry name" value="AAA"/>
    <property type="match status" value="1"/>
</dbReference>
<dbReference type="SUPFAM" id="SSF52540">
    <property type="entry name" value="P-loop containing nucleoside triphosphate hydrolases"/>
    <property type="match status" value="1"/>
</dbReference>
<dbReference type="SUPFAM" id="SSF46785">
    <property type="entry name" value="Winged helix' DNA-binding domain"/>
    <property type="match status" value="1"/>
</dbReference>
<name>RUVB_COXBU</name>
<proteinExistence type="inferred from homology"/>
<feature type="chain" id="PRO_0000165525" description="Holliday junction branch migration complex subunit RuvB">
    <location>
        <begin position="1"/>
        <end position="351"/>
    </location>
</feature>
<feature type="region of interest" description="Large ATPase domain (RuvB-L)" evidence="1">
    <location>
        <begin position="1"/>
        <end position="186"/>
    </location>
</feature>
<feature type="region of interest" description="Small ATPAse domain (RuvB-S)" evidence="1">
    <location>
        <begin position="187"/>
        <end position="257"/>
    </location>
</feature>
<feature type="region of interest" description="Head domain (RuvB-H)" evidence="1">
    <location>
        <begin position="260"/>
        <end position="351"/>
    </location>
</feature>
<feature type="binding site" evidence="1">
    <location>
        <position position="25"/>
    </location>
    <ligand>
        <name>ATP</name>
        <dbReference type="ChEBI" id="CHEBI:30616"/>
    </ligand>
</feature>
<feature type="binding site" evidence="1">
    <location>
        <position position="26"/>
    </location>
    <ligand>
        <name>ATP</name>
        <dbReference type="ChEBI" id="CHEBI:30616"/>
    </ligand>
</feature>
<feature type="binding site" evidence="1">
    <location>
        <position position="67"/>
    </location>
    <ligand>
        <name>ATP</name>
        <dbReference type="ChEBI" id="CHEBI:30616"/>
    </ligand>
</feature>
<feature type="binding site" evidence="1">
    <location>
        <position position="70"/>
    </location>
    <ligand>
        <name>ATP</name>
        <dbReference type="ChEBI" id="CHEBI:30616"/>
    </ligand>
</feature>
<feature type="binding site" evidence="1">
    <location>
        <position position="71"/>
    </location>
    <ligand>
        <name>ATP</name>
        <dbReference type="ChEBI" id="CHEBI:30616"/>
    </ligand>
</feature>
<feature type="binding site" evidence="1">
    <location>
        <position position="71"/>
    </location>
    <ligand>
        <name>Mg(2+)</name>
        <dbReference type="ChEBI" id="CHEBI:18420"/>
    </ligand>
</feature>
<feature type="binding site" evidence="1">
    <location>
        <position position="72"/>
    </location>
    <ligand>
        <name>ATP</name>
        <dbReference type="ChEBI" id="CHEBI:30616"/>
    </ligand>
</feature>
<feature type="binding site" evidence="1">
    <location>
        <begin position="133"/>
        <end position="135"/>
    </location>
    <ligand>
        <name>ATP</name>
        <dbReference type="ChEBI" id="CHEBI:30616"/>
    </ligand>
</feature>
<feature type="binding site" evidence="1">
    <location>
        <position position="176"/>
    </location>
    <ligand>
        <name>ATP</name>
        <dbReference type="ChEBI" id="CHEBI:30616"/>
    </ligand>
</feature>
<feature type="binding site" evidence="1">
    <location>
        <position position="186"/>
    </location>
    <ligand>
        <name>ATP</name>
        <dbReference type="ChEBI" id="CHEBI:30616"/>
    </ligand>
</feature>
<feature type="binding site" evidence="1">
    <location>
        <position position="223"/>
    </location>
    <ligand>
        <name>ATP</name>
        <dbReference type="ChEBI" id="CHEBI:30616"/>
    </ligand>
</feature>
<feature type="binding site" evidence="1">
    <location>
        <position position="296"/>
    </location>
    <ligand>
        <name>DNA</name>
        <dbReference type="ChEBI" id="CHEBI:16991"/>
    </ligand>
</feature>
<feature type="binding site" evidence="1">
    <location>
        <position position="315"/>
    </location>
    <ligand>
        <name>DNA</name>
        <dbReference type="ChEBI" id="CHEBI:16991"/>
    </ligand>
</feature>
<feature type="binding site" evidence="1">
    <location>
        <position position="320"/>
    </location>
    <ligand>
        <name>DNA</name>
        <dbReference type="ChEBI" id="CHEBI:16991"/>
    </ligand>
</feature>
<reference key="1">
    <citation type="journal article" date="2003" name="Proc. Natl. Acad. Sci. U.S.A.">
        <title>Complete genome sequence of the Q-fever pathogen, Coxiella burnetii.</title>
        <authorList>
            <person name="Seshadri R."/>
            <person name="Paulsen I.T."/>
            <person name="Eisen J.A."/>
            <person name="Read T.D."/>
            <person name="Nelson K.E."/>
            <person name="Nelson W.C."/>
            <person name="Ward N.L."/>
            <person name="Tettelin H."/>
            <person name="Davidsen T.M."/>
            <person name="Beanan M.J."/>
            <person name="DeBoy R.T."/>
            <person name="Daugherty S.C."/>
            <person name="Brinkac L.M."/>
            <person name="Madupu R."/>
            <person name="Dodson R.J."/>
            <person name="Khouri H.M."/>
            <person name="Lee K.H."/>
            <person name="Carty H.A."/>
            <person name="Scanlan D."/>
            <person name="Heinzen R.A."/>
            <person name="Thompson H.A."/>
            <person name="Samuel J.E."/>
            <person name="Fraser C.M."/>
            <person name="Heidelberg J.F."/>
        </authorList>
    </citation>
    <scope>NUCLEOTIDE SEQUENCE [LARGE SCALE GENOMIC DNA]</scope>
    <source>
        <strain>RSA 493 / Nine Mile phase I</strain>
    </source>
</reference>